<proteinExistence type="inferred from homology"/>
<reference key="1">
    <citation type="journal article" date="2002" name="J. Bacteriol.">
        <title>Genome sequence and analysis of the oral bacterium Fusobacterium nucleatum strain ATCC 25586.</title>
        <authorList>
            <person name="Kapatral V."/>
            <person name="Anderson I."/>
            <person name="Ivanova N."/>
            <person name="Reznik G."/>
            <person name="Los T."/>
            <person name="Lykidis A."/>
            <person name="Bhattacharyya A."/>
            <person name="Bartman A."/>
            <person name="Gardner W."/>
            <person name="Grechkin G."/>
            <person name="Zhu L."/>
            <person name="Vasieva O."/>
            <person name="Chu L."/>
            <person name="Kogan Y."/>
            <person name="Chaga O."/>
            <person name="Goltsman E."/>
            <person name="Bernal A."/>
            <person name="Larsen N."/>
            <person name="D'Souza M."/>
            <person name="Walunas T."/>
            <person name="Pusch G."/>
            <person name="Haselkorn R."/>
            <person name="Fonstein M."/>
            <person name="Kyrpides N.C."/>
            <person name="Overbeek R."/>
        </authorList>
    </citation>
    <scope>NUCLEOTIDE SEQUENCE [LARGE SCALE GENOMIC DNA]</scope>
    <source>
        <strain>ATCC 25586 / DSM 15643 / BCRC 10681 / CIP 101130 / JCM 8532 / KCTC 2640 / LMG 13131 / VPI 4355</strain>
    </source>
</reference>
<feature type="chain" id="PRO_0000082967" description="Methionyl-tRNA formyltransferase">
    <location>
        <begin position="1"/>
        <end position="310"/>
    </location>
</feature>
<feature type="binding site" evidence="1">
    <location>
        <begin position="108"/>
        <end position="111"/>
    </location>
    <ligand>
        <name>(6S)-5,6,7,8-tetrahydrofolate</name>
        <dbReference type="ChEBI" id="CHEBI:57453"/>
    </ligand>
</feature>
<name>FMT_FUSNN</name>
<gene>
    <name evidence="1" type="primary">fmt</name>
    <name type="ordered locus">FN1489</name>
</gene>
<evidence type="ECO:0000255" key="1">
    <source>
        <dbReference type="HAMAP-Rule" id="MF_00182"/>
    </source>
</evidence>
<evidence type="ECO:0000305" key="2"/>
<accession>Q8RDM3</accession>
<protein>
    <recommendedName>
        <fullName evidence="1">Methionyl-tRNA formyltransferase</fullName>
        <ecNumber evidence="1">2.1.2.9</ecNumber>
    </recommendedName>
</protein>
<dbReference type="EC" id="2.1.2.9" evidence="1"/>
<dbReference type="EMBL" id="AE009951">
    <property type="protein sequence ID" value="AAL95683.1"/>
    <property type="status" value="ALT_INIT"/>
    <property type="molecule type" value="Genomic_DNA"/>
</dbReference>
<dbReference type="RefSeq" id="NP_604383.1">
    <property type="nucleotide sequence ID" value="NC_003454.1"/>
</dbReference>
<dbReference type="SMR" id="Q8RDM3"/>
<dbReference type="FunCoup" id="Q8RDM3">
    <property type="interactions" value="353"/>
</dbReference>
<dbReference type="STRING" id="190304.FN1489"/>
<dbReference type="PaxDb" id="190304-FN1489"/>
<dbReference type="EnsemblBacteria" id="AAL95683">
    <property type="protein sequence ID" value="AAL95683"/>
    <property type="gene ID" value="FN1489"/>
</dbReference>
<dbReference type="KEGG" id="fnu:FN1489"/>
<dbReference type="PATRIC" id="fig|190304.8.peg.2049"/>
<dbReference type="eggNOG" id="COG0223">
    <property type="taxonomic scope" value="Bacteria"/>
</dbReference>
<dbReference type="HOGENOM" id="CLU_033347_1_1_0"/>
<dbReference type="InParanoid" id="Q8RDM3"/>
<dbReference type="Proteomes" id="UP000002521">
    <property type="component" value="Chromosome"/>
</dbReference>
<dbReference type="GO" id="GO:0005829">
    <property type="term" value="C:cytosol"/>
    <property type="evidence" value="ECO:0000318"/>
    <property type="project" value="GO_Central"/>
</dbReference>
<dbReference type="GO" id="GO:0004479">
    <property type="term" value="F:methionyl-tRNA formyltransferase activity"/>
    <property type="evidence" value="ECO:0000318"/>
    <property type="project" value="GO_Central"/>
</dbReference>
<dbReference type="GO" id="GO:0071951">
    <property type="term" value="P:conversion of methionyl-tRNA to N-formyl-methionyl-tRNA"/>
    <property type="evidence" value="ECO:0000318"/>
    <property type="project" value="GO_Central"/>
</dbReference>
<dbReference type="CDD" id="cd08646">
    <property type="entry name" value="FMT_core_Met-tRNA-FMT_N"/>
    <property type="match status" value="1"/>
</dbReference>
<dbReference type="CDD" id="cd08704">
    <property type="entry name" value="Met_tRNA_FMT_C"/>
    <property type="match status" value="1"/>
</dbReference>
<dbReference type="FunFam" id="3.40.50.12230:FF:000001">
    <property type="entry name" value="Methionyl-tRNA formyltransferase"/>
    <property type="match status" value="1"/>
</dbReference>
<dbReference type="Gene3D" id="3.40.50.12230">
    <property type="match status" value="1"/>
</dbReference>
<dbReference type="HAMAP" id="MF_00182">
    <property type="entry name" value="Formyl_trans"/>
    <property type="match status" value="1"/>
</dbReference>
<dbReference type="InterPro" id="IPR005794">
    <property type="entry name" value="Fmt"/>
</dbReference>
<dbReference type="InterPro" id="IPR005793">
    <property type="entry name" value="Formyl_trans_C"/>
</dbReference>
<dbReference type="InterPro" id="IPR002376">
    <property type="entry name" value="Formyl_transf_N"/>
</dbReference>
<dbReference type="InterPro" id="IPR036477">
    <property type="entry name" value="Formyl_transf_N_sf"/>
</dbReference>
<dbReference type="InterPro" id="IPR011034">
    <property type="entry name" value="Formyl_transferase-like_C_sf"/>
</dbReference>
<dbReference type="InterPro" id="IPR001555">
    <property type="entry name" value="GART_AS"/>
</dbReference>
<dbReference type="InterPro" id="IPR044135">
    <property type="entry name" value="Met-tRNA-FMT_C"/>
</dbReference>
<dbReference type="InterPro" id="IPR041711">
    <property type="entry name" value="Met-tRNA-FMT_N"/>
</dbReference>
<dbReference type="NCBIfam" id="TIGR00460">
    <property type="entry name" value="fmt"/>
    <property type="match status" value="1"/>
</dbReference>
<dbReference type="PANTHER" id="PTHR11138">
    <property type="entry name" value="METHIONYL-TRNA FORMYLTRANSFERASE"/>
    <property type="match status" value="1"/>
</dbReference>
<dbReference type="PANTHER" id="PTHR11138:SF5">
    <property type="entry name" value="METHIONYL-TRNA FORMYLTRANSFERASE, MITOCHONDRIAL"/>
    <property type="match status" value="1"/>
</dbReference>
<dbReference type="Pfam" id="PF02911">
    <property type="entry name" value="Formyl_trans_C"/>
    <property type="match status" value="1"/>
</dbReference>
<dbReference type="Pfam" id="PF00551">
    <property type="entry name" value="Formyl_trans_N"/>
    <property type="match status" value="1"/>
</dbReference>
<dbReference type="SUPFAM" id="SSF50486">
    <property type="entry name" value="FMT C-terminal domain-like"/>
    <property type="match status" value="1"/>
</dbReference>
<dbReference type="SUPFAM" id="SSF53328">
    <property type="entry name" value="Formyltransferase"/>
    <property type="match status" value="1"/>
</dbReference>
<dbReference type="PROSITE" id="PS00373">
    <property type="entry name" value="GART"/>
    <property type="match status" value="1"/>
</dbReference>
<keyword id="KW-0648">Protein biosynthesis</keyword>
<keyword id="KW-1185">Reference proteome</keyword>
<keyword id="KW-0808">Transferase</keyword>
<organism>
    <name type="scientific">Fusobacterium nucleatum subsp. nucleatum (strain ATCC 25586 / DSM 15643 / BCRC 10681 / CIP 101130 / JCM 8532 / KCTC 2640 / LMG 13131 / VPI 4355)</name>
    <dbReference type="NCBI Taxonomy" id="190304"/>
    <lineage>
        <taxon>Bacteria</taxon>
        <taxon>Fusobacteriati</taxon>
        <taxon>Fusobacteriota</taxon>
        <taxon>Fusobacteriia</taxon>
        <taxon>Fusobacteriales</taxon>
        <taxon>Fusobacteriaceae</taxon>
        <taxon>Fusobacterium</taxon>
    </lineage>
</organism>
<sequence>MKIIFMGTPTFAVPSLEKIYKEHEIISVFTKVDKPNARGKKINYSPIKEFALANNLKIYQPENFKDNTLIEEIRNMQADLIVVVAYGKILPKEVIDIPKYGVINLHSSLLPRFRGAAPINAAIINGDTKSGISIMYVEEELDAGDVILQEETEISDEDTFLSLHDRLKDMGADLLLKAIELIKKGEVKAQKQDKKLVTFVKPFRKEDCKIDWTKTSREIFNFIRGMNPIPTAFSNLNGTIIKIYETKINDKVYNNATCGEVVEYLKGKGIVVKTSDGSLIISSAKPENKKQMSGVDLINGKFLKIGEKLC</sequence>
<comment type="function">
    <text evidence="1">Attaches a formyl group to the free amino group of methionyl-tRNA(fMet). The formyl group appears to play a dual role in the initiator identity of N-formylmethionyl-tRNA by promoting its recognition by IF2 and preventing the misappropriation of this tRNA by the elongation apparatus.</text>
</comment>
<comment type="catalytic activity">
    <reaction evidence="1">
        <text>L-methionyl-tRNA(fMet) + (6R)-10-formyltetrahydrofolate = N-formyl-L-methionyl-tRNA(fMet) + (6S)-5,6,7,8-tetrahydrofolate + H(+)</text>
        <dbReference type="Rhea" id="RHEA:24380"/>
        <dbReference type="Rhea" id="RHEA-COMP:9952"/>
        <dbReference type="Rhea" id="RHEA-COMP:9953"/>
        <dbReference type="ChEBI" id="CHEBI:15378"/>
        <dbReference type="ChEBI" id="CHEBI:57453"/>
        <dbReference type="ChEBI" id="CHEBI:78530"/>
        <dbReference type="ChEBI" id="CHEBI:78844"/>
        <dbReference type="ChEBI" id="CHEBI:195366"/>
        <dbReference type="EC" id="2.1.2.9"/>
    </reaction>
</comment>
<comment type="similarity">
    <text evidence="1">Belongs to the Fmt family.</text>
</comment>
<comment type="sequence caution" evidence="2">
    <conflict type="erroneous initiation">
        <sequence resource="EMBL-CDS" id="AAL95683"/>
    </conflict>
</comment>